<feature type="chain" id="PRO_1000128288" description="Small ribosomal subunit protein uS14">
    <location>
        <begin position="1"/>
        <end position="101"/>
    </location>
</feature>
<feature type="region of interest" description="Disordered" evidence="2">
    <location>
        <begin position="1"/>
        <end position="21"/>
    </location>
</feature>
<proteinExistence type="inferred from homology"/>
<keyword id="KW-1185">Reference proteome</keyword>
<keyword id="KW-0687">Ribonucleoprotein</keyword>
<keyword id="KW-0689">Ribosomal protein</keyword>
<keyword id="KW-0694">RNA-binding</keyword>
<keyword id="KW-0699">rRNA-binding</keyword>
<evidence type="ECO:0000255" key="1">
    <source>
        <dbReference type="HAMAP-Rule" id="MF_00537"/>
    </source>
</evidence>
<evidence type="ECO:0000256" key="2">
    <source>
        <dbReference type="SAM" id="MobiDB-lite"/>
    </source>
</evidence>
<evidence type="ECO:0000305" key="3"/>
<reference key="1">
    <citation type="journal article" date="2001" name="Science">
        <title>The genome of the natural genetic engineer Agrobacterium tumefaciens C58.</title>
        <authorList>
            <person name="Wood D.W."/>
            <person name="Setubal J.C."/>
            <person name="Kaul R."/>
            <person name="Monks D.E."/>
            <person name="Kitajima J.P."/>
            <person name="Okura V.K."/>
            <person name="Zhou Y."/>
            <person name="Chen L."/>
            <person name="Wood G.E."/>
            <person name="Almeida N.F. Jr."/>
            <person name="Woo L."/>
            <person name="Chen Y."/>
            <person name="Paulsen I.T."/>
            <person name="Eisen J.A."/>
            <person name="Karp P.D."/>
            <person name="Bovee D. Sr."/>
            <person name="Chapman P."/>
            <person name="Clendenning J."/>
            <person name="Deatherage G."/>
            <person name="Gillet W."/>
            <person name="Grant C."/>
            <person name="Kutyavin T."/>
            <person name="Levy R."/>
            <person name="Li M.-J."/>
            <person name="McClelland E."/>
            <person name="Palmieri A."/>
            <person name="Raymond C."/>
            <person name="Rouse G."/>
            <person name="Saenphimmachak C."/>
            <person name="Wu Z."/>
            <person name="Romero P."/>
            <person name="Gordon D."/>
            <person name="Zhang S."/>
            <person name="Yoo H."/>
            <person name="Tao Y."/>
            <person name="Biddle P."/>
            <person name="Jung M."/>
            <person name="Krespan W."/>
            <person name="Perry M."/>
            <person name="Gordon-Kamm B."/>
            <person name="Liao L."/>
            <person name="Kim S."/>
            <person name="Hendrick C."/>
            <person name="Zhao Z.-Y."/>
            <person name="Dolan M."/>
            <person name="Chumley F."/>
            <person name="Tingey S.V."/>
            <person name="Tomb J.-F."/>
            <person name="Gordon M.P."/>
            <person name="Olson M.V."/>
            <person name="Nester E.W."/>
        </authorList>
    </citation>
    <scope>NUCLEOTIDE SEQUENCE [LARGE SCALE GENOMIC DNA]</scope>
    <source>
        <strain>C58 / ATCC 33970</strain>
    </source>
</reference>
<reference key="2">
    <citation type="journal article" date="2001" name="Science">
        <title>Genome sequence of the plant pathogen and biotechnology agent Agrobacterium tumefaciens C58.</title>
        <authorList>
            <person name="Goodner B."/>
            <person name="Hinkle G."/>
            <person name="Gattung S."/>
            <person name="Miller N."/>
            <person name="Blanchard M."/>
            <person name="Qurollo B."/>
            <person name="Goldman B.S."/>
            <person name="Cao Y."/>
            <person name="Askenazi M."/>
            <person name="Halling C."/>
            <person name="Mullin L."/>
            <person name="Houmiel K."/>
            <person name="Gordon J."/>
            <person name="Vaudin M."/>
            <person name="Iartchouk O."/>
            <person name="Epp A."/>
            <person name="Liu F."/>
            <person name="Wollam C."/>
            <person name="Allinger M."/>
            <person name="Doughty D."/>
            <person name="Scott C."/>
            <person name="Lappas C."/>
            <person name="Markelz B."/>
            <person name="Flanagan C."/>
            <person name="Crowell C."/>
            <person name="Gurson J."/>
            <person name="Lomo C."/>
            <person name="Sear C."/>
            <person name="Strub G."/>
            <person name="Cielo C."/>
            <person name="Slater S."/>
        </authorList>
    </citation>
    <scope>NUCLEOTIDE SEQUENCE [LARGE SCALE GENOMIC DNA]</scope>
    <source>
        <strain>C58 / ATCC 33970</strain>
    </source>
</reference>
<accession>A9CIG1</accession>
<name>RS14_AGRFC</name>
<dbReference type="EMBL" id="AE007869">
    <property type="protein sequence ID" value="AAK87696.1"/>
    <property type="molecule type" value="Genomic_DNA"/>
</dbReference>
<dbReference type="PIR" id="AC2814">
    <property type="entry name" value="AC2814"/>
</dbReference>
<dbReference type="PIR" id="G97592">
    <property type="entry name" value="G97592"/>
</dbReference>
<dbReference type="RefSeq" id="NP_354911.1">
    <property type="nucleotide sequence ID" value="NC_003062.2"/>
</dbReference>
<dbReference type="RefSeq" id="WP_003495202.1">
    <property type="nucleotide sequence ID" value="NC_003062.2"/>
</dbReference>
<dbReference type="SMR" id="A9CIG1"/>
<dbReference type="STRING" id="176299.Atu1933"/>
<dbReference type="EnsemblBacteria" id="AAK87696">
    <property type="protein sequence ID" value="AAK87696"/>
    <property type="gene ID" value="Atu1933"/>
</dbReference>
<dbReference type="GeneID" id="92771065"/>
<dbReference type="KEGG" id="atu:Atu1933"/>
<dbReference type="PATRIC" id="fig|176299.10.peg.1945"/>
<dbReference type="eggNOG" id="COG0199">
    <property type="taxonomic scope" value="Bacteria"/>
</dbReference>
<dbReference type="HOGENOM" id="CLU_139869_0_1_5"/>
<dbReference type="OrthoDB" id="9810484at2"/>
<dbReference type="PhylomeDB" id="A9CIG1"/>
<dbReference type="BioCyc" id="AGRO:ATU1933-MONOMER"/>
<dbReference type="PRO" id="PR:A9CIG1"/>
<dbReference type="Proteomes" id="UP000000813">
    <property type="component" value="Chromosome circular"/>
</dbReference>
<dbReference type="GO" id="GO:0005737">
    <property type="term" value="C:cytoplasm"/>
    <property type="evidence" value="ECO:0007669"/>
    <property type="project" value="UniProtKB-ARBA"/>
</dbReference>
<dbReference type="GO" id="GO:0015935">
    <property type="term" value="C:small ribosomal subunit"/>
    <property type="evidence" value="ECO:0007669"/>
    <property type="project" value="TreeGrafter"/>
</dbReference>
<dbReference type="GO" id="GO:0019843">
    <property type="term" value="F:rRNA binding"/>
    <property type="evidence" value="ECO:0007669"/>
    <property type="project" value="UniProtKB-UniRule"/>
</dbReference>
<dbReference type="GO" id="GO:0003735">
    <property type="term" value="F:structural constituent of ribosome"/>
    <property type="evidence" value="ECO:0007669"/>
    <property type="project" value="InterPro"/>
</dbReference>
<dbReference type="GO" id="GO:0006412">
    <property type="term" value="P:translation"/>
    <property type="evidence" value="ECO:0007669"/>
    <property type="project" value="UniProtKB-UniRule"/>
</dbReference>
<dbReference type="FunFam" id="1.10.287.1480:FF:000001">
    <property type="entry name" value="30S ribosomal protein S14"/>
    <property type="match status" value="1"/>
</dbReference>
<dbReference type="Gene3D" id="1.10.287.1480">
    <property type="match status" value="1"/>
</dbReference>
<dbReference type="HAMAP" id="MF_00537">
    <property type="entry name" value="Ribosomal_uS14_1"/>
    <property type="match status" value="1"/>
</dbReference>
<dbReference type="InterPro" id="IPR001209">
    <property type="entry name" value="Ribosomal_uS14"/>
</dbReference>
<dbReference type="InterPro" id="IPR023036">
    <property type="entry name" value="Ribosomal_uS14_bac/plastid"/>
</dbReference>
<dbReference type="InterPro" id="IPR018271">
    <property type="entry name" value="Ribosomal_uS14_CS"/>
</dbReference>
<dbReference type="NCBIfam" id="NF006477">
    <property type="entry name" value="PRK08881.1"/>
    <property type="match status" value="1"/>
</dbReference>
<dbReference type="PANTHER" id="PTHR19836">
    <property type="entry name" value="30S RIBOSOMAL PROTEIN S14"/>
    <property type="match status" value="1"/>
</dbReference>
<dbReference type="PANTHER" id="PTHR19836:SF19">
    <property type="entry name" value="SMALL RIBOSOMAL SUBUNIT PROTEIN US14M"/>
    <property type="match status" value="1"/>
</dbReference>
<dbReference type="Pfam" id="PF00253">
    <property type="entry name" value="Ribosomal_S14"/>
    <property type="match status" value="1"/>
</dbReference>
<dbReference type="SUPFAM" id="SSF57716">
    <property type="entry name" value="Glucocorticoid receptor-like (DNA-binding domain)"/>
    <property type="match status" value="1"/>
</dbReference>
<dbReference type="PROSITE" id="PS00527">
    <property type="entry name" value="RIBOSOMAL_S14"/>
    <property type="match status" value="1"/>
</dbReference>
<gene>
    <name evidence="1" type="primary">rpsN</name>
    <name type="ordered locus">Atu1933</name>
    <name type="ORF">AGR_C_3535</name>
</gene>
<organism>
    <name type="scientific">Agrobacterium fabrum (strain C58 / ATCC 33970)</name>
    <name type="common">Agrobacterium tumefaciens (strain C58)</name>
    <dbReference type="NCBI Taxonomy" id="176299"/>
    <lineage>
        <taxon>Bacteria</taxon>
        <taxon>Pseudomonadati</taxon>
        <taxon>Pseudomonadota</taxon>
        <taxon>Alphaproteobacteria</taxon>
        <taxon>Hyphomicrobiales</taxon>
        <taxon>Rhizobiaceae</taxon>
        <taxon>Rhizobium/Agrobacterium group</taxon>
        <taxon>Agrobacterium</taxon>
        <taxon>Agrobacterium tumefaciens complex</taxon>
    </lineage>
</organism>
<comment type="function">
    <text evidence="1">Binds 16S rRNA, required for the assembly of 30S particles and may also be responsible for determining the conformation of the 16S rRNA at the A site.</text>
</comment>
<comment type="subunit">
    <text evidence="1">Part of the 30S ribosomal subunit. Contacts proteins S3 and S10.</text>
</comment>
<comment type="similarity">
    <text evidence="1">Belongs to the universal ribosomal protein uS14 family.</text>
</comment>
<sequence>MAKTSAVEKNKRRRKSVAQQATKRAALKAIVMNQSLPIEDRFKATLKLASLPRDGSKTRIRNRCEVTGRPRAFYRKLKMSRIALRELGNSGKVPGIVKSSW</sequence>
<protein>
    <recommendedName>
        <fullName evidence="1">Small ribosomal subunit protein uS14</fullName>
    </recommendedName>
    <alternativeName>
        <fullName evidence="3">30S ribosomal protein S14</fullName>
    </alternativeName>
</protein>